<accession>P63128</accession>
<accession>Q9UKH4</accession>
<sequence>MGQTKSKIKSKYASYLSFIKILLKRGGVKVSTKNLIKLFQIIEQFCPWFPEQGTLDLKDWKRIGKELKQAGRKGNIIPLTVWNDWAIIKAALEPFQTEEDSISVSDAPGSGIIDCNEKTRKKSQKETESLHCEYVAEPVMAQSTQNVDYNQLQEVIYPETLKLEGKGPELVGPSESKPRGTSPLPAGQVPVTLQPQKQVKENKTQPPVAYQYWPPAELQYRPPPESQYGYPGMPPAPQGRAPYPQPPTRRLNPTAPPSRQGSELHEIIDKSRKEGDTEAWQFPVTLEPMPPGEGAQEGEPPTVEARYKSFSIKILKDMKEGVKQYGPNSPYMRTLLDSIAHGHRLIPYDWEILAKSSLSPSQFLQFKTWWIDGVQEQVRRNRAANPPVNIDADQLLGIGQNWSTISQQALMQNEAIEQVRAICLRAWEKIQDPGSTCPSFNTVRQGSKEPYPDFVARLQDVAQKSIADEKARKVIVELMAYENANPECQSAIKPLKGKVPAGSDVISEYVKACDGIGGAMHKAMLMAQAITGVVLGGQVRTFGGKCYNCGQIGHLKKNCPVLNKQNITIQATTTGREPPDLCPRCKKGKHWASQCRSKFDKNGQPLSGNEQRGQPQAPQQTGAFPIQPFVPQGFQGQQPPLSQVFQGISQLPQYNNCPPPQVAVQQVDLCTIQAVSLLPGEPPQKIPTGVYGPLPEGTVGLILGRSSLNLKGVQIHTSVVDSDYKGEIQLVISSSVPWSASPGDRIAQLLLLPYIKGGNSEIKRIGGLGSTDPTGKAAYWASQVSENRPVCKAIIQGKQFEGLVDTGADVSIIALNQWPKNWPKQKAVTGLVGIGTASEVYQSMEILHCLGPDNQESTVQPMITSIPLNLWGRDLLQQWGAEITMPAPLYSPTSQKIMTKRGYIPGKGLGKNEDGIKIPFEAKINQKREGIGYPFLGAATIEPPKPIPLTWKTEKPVWVNQWPLPKQKLEALHLLANEQLEKGHIEPSFSPWNSPVFVIQKKSGKWRMLTDLRAVNAVIQPMGPLQPGLPSPAMIPKDWPLIIIDLKDCFFTIPLAEQDCEKFAFTIPAINNKEPATRFQWKVLPQGMLNSPTICQTFVGRALQPVKVFRLLYYSLY</sequence>
<comment type="function">
    <text evidence="1">The products of the Gag polyproteins of infectious retroviruses perform highly complex orchestrated tasks during the assembly, budding, maturation, and infection stages of the viral replication cycle. During viral assembly, the proteins form membrane associations and self-associations that ultimately result in budding of an immature virion from the infected cell. Gag precursors also function during viral assembly to selectively bind and package two plus strands of genomic RNA. Endogenous Gag proteins may have kept, lost or modified their original function during evolution (By similarity).</text>
</comment>
<comment type="function">
    <text evidence="1">Early post-infection, the reverse transcriptase converts the viral RNA genome into double-stranded viral DNA. The RNase H domain of the reverse transcriptase performs two functions. It degrades the RNA template and specifically removes the RNA primer from the RNA/DNA hybrid. Following nuclear import, the integrase catalyzes the insertion of the linear, double-stranded viral DNA into the host cell chromosome. Endogenous Pol proteins may have kept, lost or modified their original function during evolution (By similarity).</text>
</comment>
<comment type="catalytic activity">
    <reaction>
        <text>Processing at the authentic HIV-1 PR recognition site and release of the mature p17 matrix and the p24 capsid protein, as a result of the cleavage of the -SQNY-|-PIVQ- cleavage site.</text>
        <dbReference type="EC" id="3.4.23.50"/>
    </reaction>
</comment>
<comment type="catalytic activity">
    <reaction evidence="6">
        <text>DNA(n) + a 2'-deoxyribonucleoside 5'-triphosphate = DNA(n+1) + diphosphate</text>
        <dbReference type="Rhea" id="RHEA:22508"/>
        <dbReference type="Rhea" id="RHEA-COMP:17339"/>
        <dbReference type="Rhea" id="RHEA-COMP:17340"/>
        <dbReference type="ChEBI" id="CHEBI:33019"/>
        <dbReference type="ChEBI" id="CHEBI:61560"/>
        <dbReference type="ChEBI" id="CHEBI:173112"/>
        <dbReference type="EC" id="2.7.7.49"/>
    </reaction>
</comment>
<comment type="catalytic activity">
    <reaction evidence="6">
        <text>DNA(n) + a 2'-deoxyribonucleoside 5'-triphosphate = DNA(n+1) + diphosphate</text>
        <dbReference type="Rhea" id="RHEA:22508"/>
        <dbReference type="Rhea" id="RHEA-COMP:17339"/>
        <dbReference type="Rhea" id="RHEA-COMP:17340"/>
        <dbReference type="ChEBI" id="CHEBI:33019"/>
        <dbReference type="ChEBI" id="CHEBI:61560"/>
        <dbReference type="ChEBI" id="CHEBI:173112"/>
        <dbReference type="EC" id="2.7.7.7"/>
    </reaction>
</comment>
<comment type="catalytic activity">
    <reaction>
        <text>Endonucleolytic cleavage to 5'-phosphomonoester.</text>
        <dbReference type="EC" id="3.1.26.4"/>
    </reaction>
</comment>
<comment type="subcellular location">
    <subcellularLocation>
        <location>Cell membrane</location>
    </subcellularLocation>
    <text evidence="1">Cytoplasmic membrane (in a transfection system).</text>
</comment>
<comment type="alternative products">
    <event type="ribosomal frameshifting"/>
    <isoform>
        <id>P63128-1</id>
        <name>1</name>
        <sequence type="displayed"/>
    </isoform>
    <isoform>
        <id>P63126-1</id>
        <name>2</name>
        <sequence type="external"/>
    </isoform>
    <text>This protein is synthesized as a Gag polypeptide and as a Gag-Pro-Pol polyprotein. The later is the precursor of the Pro and Pol proteins. It is thought, by similarity with type-B retroviruses, to be generated by -1 frameshifts occurring at the Gag-Pro and Pro-Pol genes boundaries.</text>
</comment>
<comment type="domain">
    <text>The LPQG motifs are catalytically important and conserved among many retroviruses.</text>
</comment>
<comment type="domain">
    <text>HERV-K Gag polyprotein contains regions homologous to the matrix (MA), capsid (CA) and nucleocapsid (NC) proteins from infectious retroviruses. Evidence suggests that HERV-K(HML-2) Gag polyprotein can be cleaved into mature MA, CA and NC under certain circumstances. However, the exact boundaries as well as the size of processed Gag proteins have not been precisely determined yet.</text>
</comment>
<comment type="PTM">
    <text evidence="1">Myristoylation is essential for retroviral assembly. Alteration of the glycine residue leads to a block in the budding of particles and an accumulation of Gag inside the cell (By similarity).</text>
</comment>
<comment type="PTM">
    <text evidence="9">Specific enzymatic cleavages may yield mature proteins.</text>
</comment>
<comment type="similarity">
    <text evidence="9">Belongs to the beta type-B retroviral polymerase family. HERV class-II K(HML-2) pol subfamily.</text>
</comment>
<comment type="caution">
    <text evidence="9">Truncated; frameshift leads to premature stop codon.</text>
</comment>
<reference key="1">
    <citation type="journal article" date="1999" name="Curr. Biol.">
        <title>Many human endogenous retrovirus K (HERV-K) proviruses are unique to humans.</title>
        <authorList>
            <person name="Barbulescu M."/>
            <person name="Turner G."/>
            <person name="Seaman M.I."/>
            <person name="Deinard A.S."/>
            <person name="Kidd K.K."/>
            <person name="Lenz J."/>
        </authorList>
    </citation>
    <scope>NUCLEOTIDE SEQUENCE [GENOMIC DNA]</scope>
</reference>
<evidence type="ECO:0000250" key="1"/>
<evidence type="ECO:0000255" key="2"/>
<evidence type="ECO:0000255" key="3">
    <source>
        <dbReference type="PROSITE-ProRule" id="PRU00047"/>
    </source>
</evidence>
<evidence type="ECO:0000255" key="4">
    <source>
        <dbReference type="PROSITE-ProRule" id="PRU00092"/>
    </source>
</evidence>
<evidence type="ECO:0000255" key="5">
    <source>
        <dbReference type="PROSITE-ProRule" id="PRU00275"/>
    </source>
</evidence>
<evidence type="ECO:0000255" key="6">
    <source>
        <dbReference type="PROSITE-ProRule" id="PRU00405"/>
    </source>
</evidence>
<evidence type="ECO:0000255" key="7">
    <source>
        <dbReference type="PROSITE-ProRule" id="PRU10094"/>
    </source>
</evidence>
<evidence type="ECO:0000256" key="8">
    <source>
        <dbReference type="SAM" id="MobiDB-lite"/>
    </source>
</evidence>
<evidence type="ECO:0000305" key="9"/>
<evidence type="ECO:0007829" key="10">
    <source>
        <dbReference type="PDB" id="6SA9"/>
    </source>
</evidence>
<proteinExistence type="evidence at protein level"/>
<feature type="initiator methionine" description="Removed" evidence="2">
    <location>
        <position position="1"/>
    </location>
</feature>
<feature type="chain" id="PRO_0000186764" description="Endogenous retrovirus group K member 9 Pol protein">
    <location>
        <begin position="2"/>
        <end position="1117"/>
    </location>
</feature>
<feature type="domain" description="Reverse transcriptase" evidence="6">
    <location>
        <begin position="58"/>
        <end position="195"/>
    </location>
</feature>
<feature type="domain" description="Peptidase A2" evidence="5">
    <location>
        <begin position="800"/>
        <end position="875"/>
    </location>
</feature>
<feature type="domain" description="G-patch" evidence="4">
    <location>
        <begin position="890"/>
        <end position="936"/>
    </location>
</feature>
<feature type="zinc finger region" description="CCHC-type 1" evidence="3">
    <location>
        <begin position="544"/>
        <end position="561"/>
    </location>
</feature>
<feature type="zinc finger region" description="CCHC-type 2" evidence="3">
    <location>
        <begin position="580"/>
        <end position="597"/>
    </location>
</feature>
<feature type="region of interest" description="Disordered" evidence="8">
    <location>
        <begin position="165"/>
        <end position="264"/>
    </location>
</feature>
<feature type="region of interest" description="Disordered" evidence="8">
    <location>
        <begin position="598"/>
        <end position="629"/>
    </location>
</feature>
<feature type="compositionally biased region" description="Pro residues" evidence="8">
    <location>
        <begin position="232"/>
        <end position="247"/>
    </location>
</feature>
<feature type="compositionally biased region" description="Polar residues" evidence="8">
    <location>
        <begin position="604"/>
        <end position="622"/>
    </location>
</feature>
<feature type="active site" evidence="7">
    <location>
        <position position="805"/>
    </location>
</feature>
<feature type="lipid moiety-binding region" description="N-myristoyl glycine" evidence="2">
    <location>
        <position position="2"/>
    </location>
</feature>
<feature type="strand" evidence="10">
    <location>
        <begin position="284"/>
        <end position="286"/>
    </location>
</feature>
<feature type="helix" evidence="10">
    <location>
        <begin position="312"/>
        <end position="325"/>
    </location>
</feature>
<feature type="helix" evidence="10">
    <location>
        <begin position="330"/>
        <end position="342"/>
    </location>
</feature>
<feature type="helix" evidence="10">
    <location>
        <begin position="347"/>
        <end position="357"/>
    </location>
</feature>
<feature type="helix" evidence="10">
    <location>
        <begin position="360"/>
        <end position="383"/>
    </location>
</feature>
<feature type="strand" evidence="10">
    <location>
        <begin position="384"/>
        <end position="386"/>
    </location>
</feature>
<feature type="helix" evidence="10">
    <location>
        <begin position="392"/>
        <end position="396"/>
    </location>
</feature>
<feature type="helix" evidence="10">
    <location>
        <begin position="399"/>
        <end position="402"/>
    </location>
</feature>
<feature type="helix" evidence="10">
    <location>
        <begin position="405"/>
        <end position="408"/>
    </location>
</feature>
<feature type="helix" evidence="10">
    <location>
        <begin position="413"/>
        <end position="428"/>
    </location>
</feature>
<keyword id="KW-0002">3D-structure</keyword>
<keyword id="KW-1003">Cell membrane</keyword>
<keyword id="KW-0895">ERV</keyword>
<keyword id="KW-0378">Hydrolase</keyword>
<keyword id="KW-0449">Lipoprotein</keyword>
<keyword id="KW-0472">Membrane</keyword>
<keyword id="KW-0479">Metal-binding</keyword>
<keyword id="KW-0511">Multifunctional enzyme</keyword>
<keyword id="KW-0519">Myristate</keyword>
<keyword id="KW-0548">Nucleotidyltransferase</keyword>
<keyword id="KW-0645">Protease</keyword>
<keyword id="KW-1185">Reference proteome</keyword>
<keyword id="KW-0677">Repeat</keyword>
<keyword id="KW-0688">Ribosomal frameshifting</keyword>
<keyword id="KW-0694">RNA-binding</keyword>
<keyword id="KW-0695">RNA-directed DNA polymerase</keyword>
<keyword id="KW-0808">Transferase</keyword>
<keyword id="KW-0814">Transposable element</keyword>
<keyword id="KW-0862">Zinc</keyword>
<keyword id="KW-0863">Zinc-finger</keyword>
<name>POK9_HUMAN</name>
<protein>
    <recommendedName>
        <fullName>Endogenous retrovirus group K member 9 Pol protein</fullName>
    </recommendedName>
    <alternativeName>
        <fullName>HERV-K(C6) Gag-Pol protein</fullName>
    </alternativeName>
    <alternativeName>
        <fullName>HERV-K109 Gag-Pol protein</fullName>
    </alternativeName>
    <alternativeName>
        <fullName>HERV-K_6q14.1 provirus ancestral Gag-Pol polyprotein</fullName>
    </alternativeName>
    <domain>
        <recommendedName>
            <fullName>Protease</fullName>
            <ecNumber>3.4.23.50</ecNumber>
        </recommendedName>
        <alternativeName>
            <fullName>PR</fullName>
        </alternativeName>
        <alternativeName>
            <fullName>Retropepsin</fullName>
        </alternativeName>
    </domain>
    <domain>
        <recommendedName>
            <fullName>Reverse transcriptase/ribonuclease H</fullName>
            <ecNumber>2.7.7.49</ecNumber>
            <ecNumber>2.7.7.7</ecNumber>
            <ecNumber>3.1.26.4</ecNumber>
        </recommendedName>
        <alternativeName>
            <fullName>p66 RT</fullName>
        </alternativeName>
    </domain>
</protein>
<dbReference type="EC" id="3.4.23.50"/>
<dbReference type="EC" id="2.7.7.49"/>
<dbReference type="EC" id="2.7.7.7"/>
<dbReference type="EC" id="3.1.26.4"/>
<dbReference type="EMBL" id="AF164615">
    <property type="protein sequence ID" value="AAD51799.1"/>
    <property type="status" value="ALT_SEQ"/>
    <property type="molecule type" value="Genomic_DNA"/>
</dbReference>
<dbReference type="PDB" id="6SA9">
    <property type="method" value="X-ray"/>
    <property type="resolution" value="1.80 A"/>
    <property type="chains" value="A/B=282-433"/>
</dbReference>
<dbReference type="PDBsum" id="6SA9"/>
<dbReference type="SMR" id="P63128"/>
<dbReference type="iPTMnet" id="P63128"/>
<dbReference type="PhosphoSitePlus" id="P63128"/>
<dbReference type="BioMuta" id="HGNC:39005"/>
<dbReference type="DMDM" id="118572691"/>
<dbReference type="jPOST" id="P63128"/>
<dbReference type="MassIVE" id="P63128"/>
<dbReference type="PeptideAtlas" id="P63128"/>
<dbReference type="GeneCards" id="ERVK-9"/>
<dbReference type="HGNC" id="HGNC:39005">
    <property type="gene designation" value="ERVK-9"/>
</dbReference>
<dbReference type="neXtProt" id="NX_P63128"/>
<dbReference type="InParanoid" id="P63128"/>
<dbReference type="PAN-GO" id="P63128">
    <property type="GO annotations" value="0 GO annotations based on evolutionary models"/>
</dbReference>
<dbReference type="PhylomeDB" id="P63128"/>
<dbReference type="Pharos" id="P63128">
    <property type="development level" value="Tdark"/>
</dbReference>
<dbReference type="Proteomes" id="UP000005640">
    <property type="component" value="Unplaced"/>
</dbReference>
<dbReference type="RNAct" id="P63128">
    <property type="molecule type" value="protein"/>
</dbReference>
<dbReference type="GO" id="GO:0005886">
    <property type="term" value="C:plasma membrane"/>
    <property type="evidence" value="ECO:0007669"/>
    <property type="project" value="UniProtKB-SubCell"/>
</dbReference>
<dbReference type="GO" id="GO:0004190">
    <property type="term" value="F:aspartic-type endopeptidase activity"/>
    <property type="evidence" value="ECO:0007669"/>
    <property type="project" value="InterPro"/>
</dbReference>
<dbReference type="GO" id="GO:0003887">
    <property type="term" value="F:DNA-directed DNA polymerase activity"/>
    <property type="evidence" value="ECO:0007669"/>
    <property type="project" value="UniProtKB-EC"/>
</dbReference>
<dbReference type="GO" id="GO:0003723">
    <property type="term" value="F:RNA binding"/>
    <property type="evidence" value="ECO:0007669"/>
    <property type="project" value="UniProtKB-KW"/>
</dbReference>
<dbReference type="GO" id="GO:0003964">
    <property type="term" value="F:RNA-directed DNA polymerase activity"/>
    <property type="evidence" value="ECO:0007669"/>
    <property type="project" value="UniProtKB-KW"/>
</dbReference>
<dbReference type="GO" id="GO:0004523">
    <property type="term" value="F:RNA-DNA hybrid ribonuclease activity"/>
    <property type="evidence" value="ECO:0007669"/>
    <property type="project" value="UniProtKB-EC"/>
</dbReference>
<dbReference type="GO" id="GO:0005198">
    <property type="term" value="F:structural molecule activity"/>
    <property type="evidence" value="ECO:0007669"/>
    <property type="project" value="InterPro"/>
</dbReference>
<dbReference type="GO" id="GO:0008270">
    <property type="term" value="F:zinc ion binding"/>
    <property type="evidence" value="ECO:0007669"/>
    <property type="project" value="UniProtKB-KW"/>
</dbReference>
<dbReference type="GO" id="GO:0006508">
    <property type="term" value="P:proteolysis"/>
    <property type="evidence" value="ECO:0007669"/>
    <property type="project" value="UniProtKB-KW"/>
</dbReference>
<dbReference type="GO" id="GO:0075523">
    <property type="term" value="P:viral translational frameshifting"/>
    <property type="evidence" value="ECO:0007669"/>
    <property type="project" value="UniProtKB-KW"/>
</dbReference>
<dbReference type="CDD" id="cd05482">
    <property type="entry name" value="HIV_retropepsin_like"/>
    <property type="match status" value="1"/>
</dbReference>
<dbReference type="CDD" id="cd07557">
    <property type="entry name" value="trimeric_dUTPase"/>
    <property type="match status" value="1"/>
</dbReference>
<dbReference type="Gene3D" id="1.10.1200.30">
    <property type="match status" value="1"/>
</dbReference>
<dbReference type="Gene3D" id="2.70.40.10">
    <property type="match status" value="1"/>
</dbReference>
<dbReference type="Gene3D" id="3.30.70.270">
    <property type="match status" value="1"/>
</dbReference>
<dbReference type="Gene3D" id="2.40.70.10">
    <property type="entry name" value="Acid Proteases"/>
    <property type="match status" value="1"/>
</dbReference>
<dbReference type="Gene3D" id="3.10.10.10">
    <property type="entry name" value="HIV Type 1 Reverse Transcriptase, subunit A, domain 1"/>
    <property type="match status" value="1"/>
</dbReference>
<dbReference type="Gene3D" id="1.10.375.10">
    <property type="entry name" value="Human Immunodeficiency Virus Type 1 Capsid Protein"/>
    <property type="match status" value="1"/>
</dbReference>
<dbReference type="Gene3D" id="1.10.150.490">
    <property type="entry name" value="Retroviral GAG p10 protein"/>
    <property type="match status" value="1"/>
</dbReference>
<dbReference type="Gene3D" id="4.10.60.10">
    <property type="entry name" value="Zinc finger, CCHC-type"/>
    <property type="match status" value="1"/>
</dbReference>
<dbReference type="InterPro" id="IPR001969">
    <property type="entry name" value="Aspartic_peptidase_AS"/>
</dbReference>
<dbReference type="InterPro" id="IPR003322">
    <property type="entry name" value="B_retro_matrix"/>
</dbReference>
<dbReference type="InterPro" id="IPR038124">
    <property type="entry name" value="B_retro_matrix_sf"/>
</dbReference>
<dbReference type="InterPro" id="IPR043502">
    <property type="entry name" value="DNA/RNA_pol_sf"/>
</dbReference>
<dbReference type="InterPro" id="IPR029054">
    <property type="entry name" value="dUTPase-like"/>
</dbReference>
<dbReference type="InterPro" id="IPR036157">
    <property type="entry name" value="dUTPase-like_sf"/>
</dbReference>
<dbReference type="InterPro" id="IPR033704">
    <property type="entry name" value="dUTPase_trimeric"/>
</dbReference>
<dbReference type="InterPro" id="IPR000467">
    <property type="entry name" value="G_patch_dom"/>
</dbReference>
<dbReference type="InterPro" id="IPR045345">
    <property type="entry name" value="Gag_p24_C"/>
</dbReference>
<dbReference type="InterPro" id="IPR001995">
    <property type="entry name" value="Peptidase_A2_cat"/>
</dbReference>
<dbReference type="InterPro" id="IPR021109">
    <property type="entry name" value="Peptidase_aspartic_dom_sf"/>
</dbReference>
<dbReference type="InterPro" id="IPR050195">
    <property type="entry name" value="Primate_lentivir_Gag_pol-like"/>
</dbReference>
<dbReference type="InterPro" id="IPR034170">
    <property type="entry name" value="Retropepsin-like_cat_dom"/>
</dbReference>
<dbReference type="InterPro" id="IPR018061">
    <property type="entry name" value="Retropepsins"/>
</dbReference>
<dbReference type="InterPro" id="IPR008916">
    <property type="entry name" value="Retrov_capsid_C"/>
</dbReference>
<dbReference type="InterPro" id="IPR008919">
    <property type="entry name" value="Retrov_capsid_N"/>
</dbReference>
<dbReference type="InterPro" id="IPR010999">
    <property type="entry name" value="Retrovr_matrix"/>
</dbReference>
<dbReference type="InterPro" id="IPR043128">
    <property type="entry name" value="Rev_trsase/Diguanyl_cyclase"/>
</dbReference>
<dbReference type="InterPro" id="IPR000477">
    <property type="entry name" value="RT_dom"/>
</dbReference>
<dbReference type="InterPro" id="IPR001878">
    <property type="entry name" value="Znf_CCHC"/>
</dbReference>
<dbReference type="InterPro" id="IPR036875">
    <property type="entry name" value="Znf_CCHC_sf"/>
</dbReference>
<dbReference type="PANTHER" id="PTHR40389">
    <property type="entry name" value="ENDOGENOUS RETROVIRUS GROUP K MEMBER 24 GAG POLYPROTEIN-RELATED"/>
    <property type="match status" value="1"/>
</dbReference>
<dbReference type="PANTHER" id="PTHR40389:SF2">
    <property type="entry name" value="ENDOGENOUS RETROVIRUS GROUP K MEMBER 24 GAG POLYPROTEIN-RELATED"/>
    <property type="match status" value="1"/>
</dbReference>
<dbReference type="Pfam" id="PF00692">
    <property type="entry name" value="dUTPase"/>
    <property type="match status" value="1"/>
</dbReference>
<dbReference type="Pfam" id="PF01585">
    <property type="entry name" value="G-patch"/>
    <property type="match status" value="1"/>
</dbReference>
<dbReference type="Pfam" id="PF02337">
    <property type="entry name" value="Gag_p10"/>
    <property type="match status" value="1"/>
</dbReference>
<dbReference type="Pfam" id="PF00607">
    <property type="entry name" value="Gag_p24"/>
    <property type="match status" value="1"/>
</dbReference>
<dbReference type="Pfam" id="PF19317">
    <property type="entry name" value="Gag_p24_C"/>
    <property type="match status" value="1"/>
</dbReference>
<dbReference type="Pfam" id="PF00077">
    <property type="entry name" value="RVP"/>
    <property type="match status" value="1"/>
</dbReference>
<dbReference type="Pfam" id="PF00078">
    <property type="entry name" value="RVT_1"/>
    <property type="match status" value="1"/>
</dbReference>
<dbReference type="Pfam" id="PF00098">
    <property type="entry name" value="zf-CCHC"/>
    <property type="match status" value="1"/>
</dbReference>
<dbReference type="Pfam" id="PF14787">
    <property type="entry name" value="zf-CCHC_5"/>
    <property type="match status" value="1"/>
</dbReference>
<dbReference type="SMART" id="SM00443">
    <property type="entry name" value="G_patch"/>
    <property type="match status" value="1"/>
</dbReference>
<dbReference type="SMART" id="SM00343">
    <property type="entry name" value="ZnF_C2HC"/>
    <property type="match status" value="2"/>
</dbReference>
<dbReference type="SUPFAM" id="SSF50630">
    <property type="entry name" value="Acid proteases"/>
    <property type="match status" value="1"/>
</dbReference>
<dbReference type="SUPFAM" id="SSF56672">
    <property type="entry name" value="DNA/RNA polymerases"/>
    <property type="match status" value="1"/>
</dbReference>
<dbReference type="SUPFAM" id="SSF51283">
    <property type="entry name" value="dUTPase-like"/>
    <property type="match status" value="1"/>
</dbReference>
<dbReference type="SUPFAM" id="SSF47836">
    <property type="entry name" value="Retroviral matrix proteins"/>
    <property type="match status" value="1"/>
</dbReference>
<dbReference type="SUPFAM" id="SSF47353">
    <property type="entry name" value="Retrovirus capsid dimerization domain-like"/>
    <property type="match status" value="1"/>
</dbReference>
<dbReference type="SUPFAM" id="SSF47943">
    <property type="entry name" value="Retrovirus capsid protein, N-terminal core domain"/>
    <property type="match status" value="1"/>
</dbReference>
<dbReference type="SUPFAM" id="SSF57756">
    <property type="entry name" value="Retrovirus zinc finger-like domains"/>
    <property type="match status" value="2"/>
</dbReference>
<dbReference type="PROSITE" id="PS50175">
    <property type="entry name" value="ASP_PROT_RETROV"/>
    <property type="match status" value="1"/>
</dbReference>
<dbReference type="PROSITE" id="PS00141">
    <property type="entry name" value="ASP_PROTEASE"/>
    <property type="match status" value="1"/>
</dbReference>
<dbReference type="PROSITE" id="PS50174">
    <property type="entry name" value="G_PATCH"/>
    <property type="match status" value="1"/>
</dbReference>
<dbReference type="PROSITE" id="PS50878">
    <property type="entry name" value="RT_POL"/>
    <property type="match status" value="1"/>
</dbReference>
<dbReference type="PROSITE" id="PS50158">
    <property type="entry name" value="ZF_CCHC"/>
    <property type="match status" value="1"/>
</dbReference>
<organism>
    <name type="scientific">Homo sapiens</name>
    <name type="common">Human</name>
    <dbReference type="NCBI Taxonomy" id="9606"/>
    <lineage>
        <taxon>Eukaryota</taxon>
        <taxon>Metazoa</taxon>
        <taxon>Chordata</taxon>
        <taxon>Craniata</taxon>
        <taxon>Vertebrata</taxon>
        <taxon>Euteleostomi</taxon>
        <taxon>Mammalia</taxon>
        <taxon>Eutheria</taxon>
        <taxon>Euarchontoglires</taxon>
        <taxon>Primates</taxon>
        <taxon>Haplorrhini</taxon>
        <taxon>Catarrhini</taxon>
        <taxon>Hominidae</taxon>
        <taxon>Homo</taxon>
    </lineage>
</organism>
<gene>
    <name type="primary">ERVK-9</name>
</gene>